<gene>
    <name type="ordered locus">XOO1694</name>
</gene>
<protein>
    <recommendedName>
        <fullName evidence="1">UPF0060 membrane protein XOO1694</fullName>
    </recommendedName>
</protein>
<proteinExistence type="inferred from homology"/>
<accession>Q2P4S8</accession>
<comment type="subcellular location">
    <subcellularLocation>
        <location evidence="1">Cell inner membrane</location>
        <topology evidence="1">Multi-pass membrane protein</topology>
    </subcellularLocation>
</comment>
<comment type="similarity">
    <text evidence="1">Belongs to the UPF0060 family.</text>
</comment>
<comment type="sequence caution" evidence="2">
    <conflict type="frameshift">
        <sequence resource="EMBL-CDS" id="BAE68449"/>
    </conflict>
</comment>
<sequence length="112" mass="12205">MNLAPTTLLLFAATALAELVGCYLPYLWLRNGGSVWLLLPTALRLASFVWLLSLHPDASGRVYAAYGGVYIASALGLWLWWVDGVTPTRWDLLGAVCCLFGMAIIMFAPRSA</sequence>
<dbReference type="EMBL" id="AP008229">
    <property type="protein sequence ID" value="BAE68449.1"/>
    <property type="status" value="ALT_FRAME"/>
    <property type="molecule type" value="Genomic_DNA"/>
</dbReference>
<dbReference type="SMR" id="Q2P4S8"/>
<dbReference type="KEGG" id="xom:XOO1694"/>
<dbReference type="HOGENOM" id="CLU_117653_3_0_6"/>
<dbReference type="GO" id="GO:0005886">
    <property type="term" value="C:plasma membrane"/>
    <property type="evidence" value="ECO:0007669"/>
    <property type="project" value="UniProtKB-SubCell"/>
</dbReference>
<dbReference type="HAMAP" id="MF_00010">
    <property type="entry name" value="UPF0060"/>
    <property type="match status" value="1"/>
</dbReference>
<dbReference type="InterPro" id="IPR003844">
    <property type="entry name" value="UPF0060"/>
</dbReference>
<dbReference type="NCBIfam" id="NF002586">
    <property type="entry name" value="PRK02237.1"/>
    <property type="match status" value="1"/>
</dbReference>
<dbReference type="PANTHER" id="PTHR36116">
    <property type="entry name" value="UPF0060 MEMBRANE PROTEIN YNFA"/>
    <property type="match status" value="1"/>
</dbReference>
<dbReference type="PANTHER" id="PTHR36116:SF1">
    <property type="entry name" value="UPF0060 MEMBRANE PROTEIN YNFA"/>
    <property type="match status" value="1"/>
</dbReference>
<dbReference type="Pfam" id="PF02694">
    <property type="entry name" value="UPF0060"/>
    <property type="match status" value="1"/>
</dbReference>
<reference key="1">
    <citation type="journal article" date="2005" name="Jpn. Agric. Res. Q.">
        <title>Genome sequence of Xanthomonas oryzae pv. oryzae suggests contribution of large numbers of effector genes and insertion sequences to its race diversity.</title>
        <authorList>
            <person name="Ochiai H."/>
            <person name="Inoue Y."/>
            <person name="Takeya M."/>
            <person name="Sasaki A."/>
            <person name="Kaku H."/>
        </authorList>
    </citation>
    <scope>NUCLEOTIDE SEQUENCE [LARGE SCALE GENOMIC DNA]</scope>
    <source>
        <strain>MAFF 311018</strain>
    </source>
</reference>
<name>Y1694_XANOM</name>
<evidence type="ECO:0000255" key="1">
    <source>
        <dbReference type="HAMAP-Rule" id="MF_00010"/>
    </source>
</evidence>
<evidence type="ECO:0000305" key="2"/>
<organism>
    <name type="scientific">Xanthomonas oryzae pv. oryzae (strain MAFF 311018)</name>
    <dbReference type="NCBI Taxonomy" id="342109"/>
    <lineage>
        <taxon>Bacteria</taxon>
        <taxon>Pseudomonadati</taxon>
        <taxon>Pseudomonadota</taxon>
        <taxon>Gammaproteobacteria</taxon>
        <taxon>Lysobacterales</taxon>
        <taxon>Lysobacteraceae</taxon>
        <taxon>Xanthomonas</taxon>
    </lineage>
</organism>
<keyword id="KW-0997">Cell inner membrane</keyword>
<keyword id="KW-1003">Cell membrane</keyword>
<keyword id="KW-0472">Membrane</keyword>
<keyword id="KW-0812">Transmembrane</keyword>
<keyword id="KW-1133">Transmembrane helix</keyword>
<feature type="chain" id="PRO_0000282277" description="UPF0060 membrane protein XOO1694">
    <location>
        <begin position="1"/>
        <end position="112"/>
    </location>
</feature>
<feature type="transmembrane region" description="Helical" evidence="1">
    <location>
        <begin position="8"/>
        <end position="28"/>
    </location>
</feature>
<feature type="transmembrane region" description="Helical" evidence="1">
    <location>
        <begin position="32"/>
        <end position="52"/>
    </location>
</feature>
<feature type="transmembrane region" description="Helical" evidence="1">
    <location>
        <begin position="62"/>
        <end position="82"/>
    </location>
</feature>
<feature type="transmembrane region" description="Helical" evidence="1">
    <location>
        <begin position="92"/>
        <end position="112"/>
    </location>
</feature>